<name>WBP4_CHICK</name>
<reference key="1">
    <citation type="journal article" date="2005" name="Genome Biol.">
        <title>Full-length cDNAs from chicken bursal lymphocytes to facilitate gene function analysis.</title>
        <authorList>
            <person name="Caldwell R.B."/>
            <person name="Kierzek A.M."/>
            <person name="Arakawa H."/>
            <person name="Bezzubov Y."/>
            <person name="Zaim J."/>
            <person name="Fiedler P."/>
            <person name="Kutter S."/>
            <person name="Blagodatski A."/>
            <person name="Kostovska D."/>
            <person name="Koter M."/>
            <person name="Plachy J."/>
            <person name="Carninci P."/>
            <person name="Hayashizaki Y."/>
            <person name="Buerstedde J.-M."/>
        </authorList>
    </citation>
    <scope>NUCLEOTIDE SEQUENCE [LARGE SCALE MRNA]</scope>
    <source>
        <strain>CB</strain>
        <tissue>Bursa of Fabricius</tissue>
    </source>
</reference>
<feature type="chain" id="PRO_0000076068" description="WW domain-binding protein 4">
    <location>
        <begin position="1"/>
        <end position="398"/>
    </location>
</feature>
<feature type="domain" description="WW 1" evidence="4">
    <location>
        <begin position="134"/>
        <end position="167"/>
    </location>
</feature>
<feature type="domain" description="WW 2" evidence="4">
    <location>
        <begin position="175"/>
        <end position="208"/>
    </location>
</feature>
<feature type="zinc finger region" description="Matrin-type" evidence="3">
    <location>
        <begin position="11"/>
        <end position="42"/>
    </location>
</feature>
<feature type="region of interest" description="Disordered" evidence="5">
    <location>
        <begin position="84"/>
        <end position="182"/>
    </location>
</feature>
<feature type="region of interest" description="Disordered" evidence="5">
    <location>
        <begin position="200"/>
        <end position="274"/>
    </location>
</feature>
<feature type="region of interest" description="Disordered" evidence="5">
    <location>
        <begin position="300"/>
        <end position="350"/>
    </location>
</feature>
<feature type="region of interest" description="Disordered" evidence="5">
    <location>
        <begin position="379"/>
        <end position="398"/>
    </location>
</feature>
<feature type="compositionally biased region" description="Polar residues" evidence="5">
    <location>
        <begin position="92"/>
        <end position="103"/>
    </location>
</feature>
<feature type="compositionally biased region" description="Basic residues" evidence="5">
    <location>
        <begin position="112"/>
        <end position="125"/>
    </location>
</feature>
<feature type="compositionally biased region" description="Basic and acidic residues" evidence="5">
    <location>
        <begin position="126"/>
        <end position="139"/>
    </location>
</feature>
<feature type="compositionally biased region" description="Polar residues" evidence="5">
    <location>
        <begin position="169"/>
        <end position="178"/>
    </location>
</feature>
<feature type="compositionally biased region" description="Basic and acidic residues" evidence="5">
    <location>
        <begin position="221"/>
        <end position="232"/>
    </location>
</feature>
<feature type="compositionally biased region" description="Acidic residues" evidence="5">
    <location>
        <begin position="233"/>
        <end position="242"/>
    </location>
</feature>
<feature type="compositionally biased region" description="Basic and acidic residues" evidence="5">
    <location>
        <begin position="305"/>
        <end position="316"/>
    </location>
</feature>
<feature type="compositionally biased region" description="Acidic residues" evidence="5">
    <location>
        <begin position="324"/>
        <end position="333"/>
    </location>
</feature>
<protein>
    <recommendedName>
        <fullName>WW domain-binding protein 4</fullName>
        <shortName>WBP-4</shortName>
    </recommendedName>
</protein>
<comment type="function">
    <text evidence="1">Involved in pre-mRNA splicing as a component of the spliceosome. May play a role in cross-intron bridging of U1 and U2 snRNPs in the mammalian A complex.</text>
</comment>
<comment type="subunit">
    <text evidence="1 2">Component of the spliceosome B complex. Associated with U2 snRNPs. Binds splicing factors SNRPB, SNRPC and SF1 (By similarity).</text>
</comment>
<comment type="subcellular location">
    <subcellularLocation>
        <location evidence="1">Nucleus</location>
    </subcellularLocation>
    <subcellularLocation>
        <location evidence="3">Nucleus speckle</location>
    </subcellularLocation>
</comment>
<gene>
    <name type="primary">WBP4</name>
    <name type="ORF">RCJMB04_3a20</name>
</gene>
<dbReference type="EMBL" id="AJ851443">
    <property type="protein sequence ID" value="CAH65077.1"/>
    <property type="molecule type" value="mRNA"/>
</dbReference>
<dbReference type="RefSeq" id="NP_001025995.1">
    <property type="nucleotide sequence ID" value="NM_001030824.1"/>
</dbReference>
<dbReference type="SMR" id="Q5F457"/>
<dbReference type="FunCoup" id="Q5F457">
    <property type="interactions" value="1415"/>
</dbReference>
<dbReference type="STRING" id="9031.ENSGALP00000027345"/>
<dbReference type="PaxDb" id="9031-ENSGALP00000027345"/>
<dbReference type="GeneID" id="418829"/>
<dbReference type="KEGG" id="gga:418829"/>
<dbReference type="CTD" id="11193"/>
<dbReference type="VEuPathDB" id="HostDB:geneid_418829"/>
<dbReference type="eggNOG" id="KOG0150">
    <property type="taxonomic scope" value="Eukaryota"/>
</dbReference>
<dbReference type="InParanoid" id="Q5F457"/>
<dbReference type="OrthoDB" id="191651at2759"/>
<dbReference type="PhylomeDB" id="Q5F457"/>
<dbReference type="PRO" id="PR:Q5F457"/>
<dbReference type="Proteomes" id="UP000000539">
    <property type="component" value="Unassembled WGS sequence"/>
</dbReference>
<dbReference type="GO" id="GO:0016607">
    <property type="term" value="C:nuclear speck"/>
    <property type="evidence" value="ECO:0007669"/>
    <property type="project" value="UniProtKB-SubCell"/>
</dbReference>
<dbReference type="GO" id="GO:0005634">
    <property type="term" value="C:nucleus"/>
    <property type="evidence" value="ECO:0000250"/>
    <property type="project" value="UniProtKB"/>
</dbReference>
<dbReference type="GO" id="GO:0071005">
    <property type="term" value="C:U2-type precatalytic spliceosome"/>
    <property type="evidence" value="ECO:0000250"/>
    <property type="project" value="UniProtKB"/>
</dbReference>
<dbReference type="GO" id="GO:0003676">
    <property type="term" value="F:nucleic acid binding"/>
    <property type="evidence" value="ECO:0007669"/>
    <property type="project" value="InterPro"/>
</dbReference>
<dbReference type="GO" id="GO:0008270">
    <property type="term" value="F:zinc ion binding"/>
    <property type="evidence" value="ECO:0007669"/>
    <property type="project" value="UniProtKB-KW"/>
</dbReference>
<dbReference type="GO" id="GO:0000398">
    <property type="term" value="P:mRNA splicing, via spliceosome"/>
    <property type="evidence" value="ECO:0000250"/>
    <property type="project" value="UniProtKB"/>
</dbReference>
<dbReference type="CDD" id="cd00201">
    <property type="entry name" value="WW"/>
    <property type="match status" value="2"/>
</dbReference>
<dbReference type="FunFam" id="3.30.160.60:FF:000767">
    <property type="entry name" value="WW domain-binding protein 4"/>
    <property type="match status" value="1"/>
</dbReference>
<dbReference type="Gene3D" id="2.20.70.10">
    <property type="match status" value="2"/>
</dbReference>
<dbReference type="Gene3D" id="3.30.160.60">
    <property type="entry name" value="Classic Zinc Finger"/>
    <property type="match status" value="1"/>
</dbReference>
<dbReference type="InterPro" id="IPR000690">
    <property type="entry name" value="Matrin/U1-C_Znf_C2H2"/>
</dbReference>
<dbReference type="InterPro" id="IPR003604">
    <property type="entry name" value="Matrin/U1-like-C_Znf_C2H2"/>
</dbReference>
<dbReference type="InterPro" id="IPR013085">
    <property type="entry name" value="U1-CZ_Znf_C2H2"/>
</dbReference>
<dbReference type="InterPro" id="IPR040023">
    <property type="entry name" value="WBP4"/>
</dbReference>
<dbReference type="InterPro" id="IPR001202">
    <property type="entry name" value="WW_dom"/>
</dbReference>
<dbReference type="InterPro" id="IPR036020">
    <property type="entry name" value="WW_dom_sf"/>
</dbReference>
<dbReference type="InterPro" id="IPR036236">
    <property type="entry name" value="Znf_C2H2_sf"/>
</dbReference>
<dbReference type="PANTHER" id="PTHR13173">
    <property type="entry name" value="WW DOMAIN BINDING PROTEIN 4"/>
    <property type="match status" value="1"/>
</dbReference>
<dbReference type="PANTHER" id="PTHR13173:SF10">
    <property type="entry name" value="WW DOMAIN-BINDING PROTEIN 4"/>
    <property type="match status" value="1"/>
</dbReference>
<dbReference type="Pfam" id="PF00397">
    <property type="entry name" value="WW"/>
    <property type="match status" value="2"/>
</dbReference>
<dbReference type="Pfam" id="PF06220">
    <property type="entry name" value="zf-U1"/>
    <property type="match status" value="1"/>
</dbReference>
<dbReference type="SMART" id="SM00456">
    <property type="entry name" value="WW"/>
    <property type="match status" value="2"/>
</dbReference>
<dbReference type="SMART" id="SM00451">
    <property type="entry name" value="ZnF_U1"/>
    <property type="match status" value="1"/>
</dbReference>
<dbReference type="SUPFAM" id="SSF57667">
    <property type="entry name" value="beta-beta-alpha zinc fingers"/>
    <property type="match status" value="1"/>
</dbReference>
<dbReference type="SUPFAM" id="SSF51045">
    <property type="entry name" value="WW domain"/>
    <property type="match status" value="2"/>
</dbReference>
<dbReference type="PROSITE" id="PS01159">
    <property type="entry name" value="WW_DOMAIN_1"/>
    <property type="match status" value="2"/>
</dbReference>
<dbReference type="PROSITE" id="PS50020">
    <property type="entry name" value="WW_DOMAIN_2"/>
    <property type="match status" value="2"/>
</dbReference>
<dbReference type="PROSITE" id="PS50171">
    <property type="entry name" value="ZF_MATRIN"/>
    <property type="match status" value="1"/>
</dbReference>
<evidence type="ECO:0000250" key="1">
    <source>
        <dbReference type="UniProtKB" id="O75554"/>
    </source>
</evidence>
<evidence type="ECO:0000250" key="2">
    <source>
        <dbReference type="UniProtKB" id="Q61048"/>
    </source>
</evidence>
<evidence type="ECO:0000255" key="3">
    <source>
        <dbReference type="PROSITE-ProRule" id="PRU00130"/>
    </source>
</evidence>
<evidence type="ECO:0000255" key="4">
    <source>
        <dbReference type="PROSITE-ProRule" id="PRU00224"/>
    </source>
</evidence>
<evidence type="ECO:0000256" key="5">
    <source>
        <dbReference type="SAM" id="MobiDB-lite"/>
    </source>
</evidence>
<sequence>MADYWKSQPKKFCDYCKCWIADNRPSIDFHERGKNHKENVAKRISEIRKKSMEKAKEEENMSKEFAAMEEAAMKAYQEDLKRLGIKPDDVGPSSTLNKTQSITAEGKEKKEKKEKKEKKEKKKKTREGTSESPKTEPKEWVQGLSPEGYTYYYNTKTGESQWEKPKGFQGNSKTSHTGSVWVEGVSEDGHTYYYNTQTGVSTWEKPDGFVSSSNDNSQRGKHSEEADSRASESDSEQEDSESEGQSPGTNLKRKGENDEESEKEKSPKAKKLSPYGKWREVKWQEVKWQEEAVDKEKIALASKEASSDESKTDTYGKWKAIKNEEEEEPDEKVDLELPSTEGDSALPPVLDVPEDATVIFKEKTVTSLGDLTEGVPTFKKREFENGKSRNLRQRLDDQ</sequence>
<keyword id="KW-0479">Metal-binding</keyword>
<keyword id="KW-0507">mRNA processing</keyword>
<keyword id="KW-0508">mRNA splicing</keyword>
<keyword id="KW-0539">Nucleus</keyword>
<keyword id="KW-1185">Reference proteome</keyword>
<keyword id="KW-0677">Repeat</keyword>
<keyword id="KW-0747">Spliceosome</keyword>
<keyword id="KW-0862">Zinc</keyword>
<keyword id="KW-0863">Zinc-finger</keyword>
<proteinExistence type="evidence at transcript level"/>
<organism>
    <name type="scientific">Gallus gallus</name>
    <name type="common">Chicken</name>
    <dbReference type="NCBI Taxonomy" id="9031"/>
    <lineage>
        <taxon>Eukaryota</taxon>
        <taxon>Metazoa</taxon>
        <taxon>Chordata</taxon>
        <taxon>Craniata</taxon>
        <taxon>Vertebrata</taxon>
        <taxon>Euteleostomi</taxon>
        <taxon>Archelosauria</taxon>
        <taxon>Archosauria</taxon>
        <taxon>Dinosauria</taxon>
        <taxon>Saurischia</taxon>
        <taxon>Theropoda</taxon>
        <taxon>Coelurosauria</taxon>
        <taxon>Aves</taxon>
        <taxon>Neognathae</taxon>
        <taxon>Galloanserae</taxon>
        <taxon>Galliformes</taxon>
        <taxon>Phasianidae</taxon>
        <taxon>Phasianinae</taxon>
        <taxon>Gallus</taxon>
    </lineage>
</organism>
<accession>Q5F457</accession>